<protein>
    <recommendedName>
        <fullName evidence="1">Nucleoside-triphosphatase THEP1</fullName>
        <shortName evidence="1">NTPase THEP1</shortName>
        <ecNumber evidence="1">3.6.1.15</ecNumber>
    </recommendedName>
    <alternativeName>
        <fullName evidence="1">Nucleoside triphosphate phosphohydrolase</fullName>
    </alternativeName>
</protein>
<reference key="1">
    <citation type="journal article" date="2005" name="J. Bacteriol.">
        <title>The genome of Sulfolobus acidocaldarius, a model organism of the Crenarchaeota.</title>
        <authorList>
            <person name="Chen L."/>
            <person name="Bruegger K."/>
            <person name="Skovgaard M."/>
            <person name="Redder P."/>
            <person name="She Q."/>
            <person name="Torarinsson E."/>
            <person name="Greve B."/>
            <person name="Awayez M."/>
            <person name="Zibat A."/>
            <person name="Klenk H.-P."/>
            <person name="Garrett R.A."/>
        </authorList>
    </citation>
    <scope>NUCLEOTIDE SEQUENCE [LARGE SCALE GENOMIC DNA]</scope>
    <source>
        <strain>ATCC 33909 / DSM 639 / JCM 8929 / NBRC 15157 / NCIMB 11770</strain>
    </source>
</reference>
<keyword id="KW-0067">ATP-binding</keyword>
<keyword id="KW-0378">Hydrolase</keyword>
<keyword id="KW-0547">Nucleotide-binding</keyword>
<keyword id="KW-1185">Reference proteome</keyword>
<comment type="function">
    <text evidence="1">Has nucleotide phosphatase activity towards ATP, GTP, CTP, TTP and UTP. May hydrolyze nucleoside diphosphates with lower efficiency.</text>
</comment>
<comment type="catalytic activity">
    <reaction evidence="1">
        <text>a ribonucleoside 5'-triphosphate + H2O = a ribonucleoside 5'-diphosphate + phosphate + H(+)</text>
        <dbReference type="Rhea" id="RHEA:23680"/>
        <dbReference type="ChEBI" id="CHEBI:15377"/>
        <dbReference type="ChEBI" id="CHEBI:15378"/>
        <dbReference type="ChEBI" id="CHEBI:43474"/>
        <dbReference type="ChEBI" id="CHEBI:57930"/>
        <dbReference type="ChEBI" id="CHEBI:61557"/>
        <dbReference type="EC" id="3.6.1.15"/>
    </reaction>
</comment>
<comment type="similarity">
    <text evidence="1">Belongs to the THEP1 NTPase family.</text>
</comment>
<organism>
    <name type="scientific">Sulfolobus acidocaldarius (strain ATCC 33909 / DSM 639 / JCM 8929 / NBRC 15157 / NCIMB 11770)</name>
    <dbReference type="NCBI Taxonomy" id="330779"/>
    <lineage>
        <taxon>Archaea</taxon>
        <taxon>Thermoproteota</taxon>
        <taxon>Thermoprotei</taxon>
        <taxon>Sulfolobales</taxon>
        <taxon>Sulfolobaceae</taxon>
        <taxon>Sulfolobus</taxon>
    </lineage>
</organism>
<dbReference type="EC" id="3.6.1.15" evidence="1"/>
<dbReference type="EMBL" id="CP000077">
    <property type="protein sequence ID" value="AAY79441.1"/>
    <property type="molecule type" value="Genomic_DNA"/>
</dbReference>
<dbReference type="RefSeq" id="WP_011276942.1">
    <property type="nucleotide sequence ID" value="NC_007181.1"/>
</dbReference>
<dbReference type="SMR" id="Q4JCN8"/>
<dbReference type="STRING" id="330779.Saci_0011"/>
<dbReference type="GeneID" id="14550545"/>
<dbReference type="KEGG" id="sai:Saci_0011"/>
<dbReference type="PATRIC" id="fig|330779.12.peg.12"/>
<dbReference type="eggNOG" id="arCOG01034">
    <property type="taxonomic scope" value="Archaea"/>
</dbReference>
<dbReference type="HOGENOM" id="CLU_103145_1_1_2"/>
<dbReference type="Proteomes" id="UP000001018">
    <property type="component" value="Chromosome"/>
</dbReference>
<dbReference type="GO" id="GO:0005524">
    <property type="term" value="F:ATP binding"/>
    <property type="evidence" value="ECO:0007669"/>
    <property type="project" value="UniProtKB-UniRule"/>
</dbReference>
<dbReference type="GO" id="GO:0016887">
    <property type="term" value="F:ATP hydrolysis activity"/>
    <property type="evidence" value="ECO:0007669"/>
    <property type="project" value="InterPro"/>
</dbReference>
<dbReference type="CDD" id="cd19482">
    <property type="entry name" value="RecA-like_Thep1"/>
    <property type="match status" value="1"/>
</dbReference>
<dbReference type="Gene3D" id="3.40.50.300">
    <property type="entry name" value="P-loop containing nucleotide triphosphate hydrolases"/>
    <property type="match status" value="1"/>
</dbReference>
<dbReference type="HAMAP" id="MF_00796">
    <property type="entry name" value="NTPase_1"/>
    <property type="match status" value="1"/>
</dbReference>
<dbReference type="InterPro" id="IPR003593">
    <property type="entry name" value="AAA+_ATPase"/>
</dbReference>
<dbReference type="InterPro" id="IPR004948">
    <property type="entry name" value="Nuc-triphosphatase_THEP1"/>
</dbReference>
<dbReference type="InterPro" id="IPR027417">
    <property type="entry name" value="P-loop_NTPase"/>
</dbReference>
<dbReference type="NCBIfam" id="NF010248">
    <property type="entry name" value="PRK13695.1"/>
    <property type="match status" value="1"/>
</dbReference>
<dbReference type="PANTHER" id="PTHR43146">
    <property type="entry name" value="CANCER-RELATED NUCLEOSIDE-TRIPHOSPHATASE"/>
    <property type="match status" value="1"/>
</dbReference>
<dbReference type="PANTHER" id="PTHR43146:SF1">
    <property type="entry name" value="CANCER-RELATED NUCLEOSIDE-TRIPHOSPHATASE"/>
    <property type="match status" value="1"/>
</dbReference>
<dbReference type="Pfam" id="PF03266">
    <property type="entry name" value="NTPase_1"/>
    <property type="match status" value="1"/>
</dbReference>
<dbReference type="SMART" id="SM00382">
    <property type="entry name" value="AAA"/>
    <property type="match status" value="1"/>
</dbReference>
<dbReference type="SUPFAM" id="SSF52540">
    <property type="entry name" value="P-loop containing nucleoside triphosphate hydrolases"/>
    <property type="match status" value="1"/>
</dbReference>
<evidence type="ECO:0000255" key="1">
    <source>
        <dbReference type="HAMAP-Rule" id="MF_00796"/>
    </source>
</evidence>
<feature type="chain" id="PRO_0000360029" description="Nucleoside-triphosphatase THEP1">
    <location>
        <begin position="1"/>
        <end position="172"/>
    </location>
</feature>
<feature type="binding site" evidence="1">
    <location>
        <begin position="11"/>
        <end position="18"/>
    </location>
    <ligand>
        <name>ATP</name>
        <dbReference type="ChEBI" id="CHEBI:30616"/>
    </ligand>
</feature>
<feature type="binding site" evidence="1">
    <location>
        <begin position="101"/>
        <end position="108"/>
    </location>
    <ligand>
        <name>ATP</name>
        <dbReference type="ChEBI" id="CHEBI:30616"/>
    </ligand>
</feature>
<gene>
    <name type="ordered locus">Saci_0011</name>
</gene>
<proteinExistence type="inferred from homology"/>
<sequence length="172" mass="19842">MDKPFRIYITGKPGIGKTTLLFNIYRILKEKNWRITGFYCPEVRVNNTRMGFKIKSVLSGKEAWLARVDARSGIRIGKYYVVLEDNFVRQLEEEIFSFPDIILIDEIGPMELSSVSLKNLINKILTSNYPVIAVVHRSIKFDDGVIYEVTIQNRDILLEEILGRVTSNKNNI</sequence>
<name>NTPTH_SULAC</name>
<accession>Q4JCN8</accession>